<proteinExistence type="evidence at protein level"/>
<gene>
    <name evidence="6" type="primary">atdA1</name>
</gene>
<reference evidence="8" key="1">
    <citation type="journal article" date="1997" name="Microbiology">
        <title>Plasmid-encoded genes specifying aniline oxidation from Acinetobacter sp. strain YAA.</title>
        <authorList>
            <person name="Fujii T."/>
            <person name="Takeo M."/>
            <person name="Maeda Y."/>
        </authorList>
    </citation>
    <scope>NUCLEOTIDE SEQUENCE [GENOMIC DNA]</scope>
    <source>
        <strain>YAA</strain>
        <plasmid>pYA1</plasmid>
    </source>
</reference>
<reference evidence="8" key="2">
    <citation type="journal article" date="1998" name="J. Ferment. Bioeng.">
        <title>Sequence analysis of the genes encoding a multicomponent dioxygenase involved in oxidation of aniline and o-toluidine in Acinetobacter sp. strain YAA.</title>
        <authorList>
            <person name="Takeo M."/>
            <person name="Fujii T."/>
            <person name="Maeda Y."/>
        </authorList>
    </citation>
    <scope>NUCLEOTIDE SEQUENCE [GENOMIC DNA]</scope>
    <source>
        <strain>YAA</strain>
        <plasmid>pYA1</plasmid>
    </source>
</reference>
<reference key="3">
    <citation type="journal article" date="2013" name="J. Bacteriol.">
        <title>Function of a glutamine synthetase-like protein in bacterial aniline oxidation via gamma-glutamylanilide.</title>
        <authorList>
            <person name="Takeo M."/>
            <person name="Ohara A."/>
            <person name="Sakae S."/>
            <person name="Okamoto Y."/>
            <person name="Kitamura C."/>
            <person name="Kato D."/>
            <person name="Negoro S."/>
        </authorList>
    </citation>
    <scope>FUNCTION</scope>
    <scope>CATALYTIC ACTIVITY</scope>
    <scope>BIOPHYSICOCHEMICAL PROPERTIES</scope>
    <scope>SUBSTRATE SPECIFICITY</scope>
    <scope>SUBUNIT</scope>
    <source>
        <strain>YAA</strain>
        <plasmid>pYA1</plasmid>
    </source>
</reference>
<name>ATDA1_ACISP</name>
<protein>
    <recommendedName>
        <fullName evidence="4">Gamma-glutamylanilide synthase</fullName>
        <shortName evidence="4">Gamma-GA synthase</shortName>
        <ecNumber evidence="3">6.3.1.18</ecNumber>
    </recommendedName>
    <alternativeName>
        <fullName evidence="5">Glutamine synthetase-like protein</fullName>
    </alternativeName>
</protein>
<accession>Q44249</accession>
<organism>
    <name type="scientific">Acinetobacter sp</name>
    <dbReference type="NCBI Taxonomy" id="472"/>
    <lineage>
        <taxon>Bacteria</taxon>
        <taxon>Pseudomonadati</taxon>
        <taxon>Pseudomonadota</taxon>
        <taxon>Gammaproteobacteria</taxon>
        <taxon>Moraxellales</taxon>
        <taxon>Moraxellaceae</taxon>
        <taxon>Acinetobacter</taxon>
    </lineage>
</organism>
<dbReference type="EC" id="6.3.1.18" evidence="3"/>
<dbReference type="EMBL" id="D86080">
    <property type="protein sequence ID" value="BAA13010.1"/>
    <property type="molecule type" value="Genomic_DNA"/>
</dbReference>
<dbReference type="SMR" id="Q44249"/>
<dbReference type="KEGG" id="ag:BAA13010"/>
<dbReference type="BioCyc" id="MetaCyc:MONOMER-15722"/>
<dbReference type="GO" id="GO:0005737">
    <property type="term" value="C:cytoplasm"/>
    <property type="evidence" value="ECO:0007669"/>
    <property type="project" value="TreeGrafter"/>
</dbReference>
<dbReference type="GO" id="GO:0016020">
    <property type="term" value="C:membrane"/>
    <property type="evidence" value="ECO:0007669"/>
    <property type="project" value="TreeGrafter"/>
</dbReference>
<dbReference type="GO" id="GO:0016880">
    <property type="term" value="F:acid-ammonia (or amide) ligase activity"/>
    <property type="evidence" value="ECO:0000314"/>
    <property type="project" value="UniProtKB"/>
</dbReference>
<dbReference type="GO" id="GO:0005524">
    <property type="term" value="F:ATP binding"/>
    <property type="evidence" value="ECO:0007669"/>
    <property type="project" value="UniProtKB-KW"/>
</dbReference>
<dbReference type="GO" id="GO:0004356">
    <property type="term" value="F:glutamine synthetase activity"/>
    <property type="evidence" value="ECO:0007669"/>
    <property type="project" value="InterPro"/>
</dbReference>
<dbReference type="GO" id="GO:0006542">
    <property type="term" value="P:glutamine biosynthetic process"/>
    <property type="evidence" value="ECO:0007669"/>
    <property type="project" value="InterPro"/>
</dbReference>
<dbReference type="FunFam" id="3.30.590.10:FF:000031">
    <property type="entry name" value="Gamma-glutamylanilide synthase"/>
    <property type="match status" value="1"/>
</dbReference>
<dbReference type="Gene3D" id="3.10.20.70">
    <property type="entry name" value="Glutamine synthetase, N-terminal domain"/>
    <property type="match status" value="1"/>
</dbReference>
<dbReference type="Gene3D" id="3.30.590.10">
    <property type="entry name" value="Glutamine synthetase/guanido kinase, catalytic domain"/>
    <property type="match status" value="1"/>
</dbReference>
<dbReference type="InterPro" id="IPR008147">
    <property type="entry name" value="Gln_synt_N"/>
</dbReference>
<dbReference type="InterPro" id="IPR036651">
    <property type="entry name" value="Gln_synt_N_sf"/>
</dbReference>
<dbReference type="InterPro" id="IPR014746">
    <property type="entry name" value="Gln_synth/guanido_kin_cat_dom"/>
</dbReference>
<dbReference type="InterPro" id="IPR008146">
    <property type="entry name" value="Gln_synth_cat_dom"/>
</dbReference>
<dbReference type="PANTHER" id="PTHR43407">
    <property type="entry name" value="GLUTAMINE SYNTHETASE"/>
    <property type="match status" value="1"/>
</dbReference>
<dbReference type="PANTHER" id="PTHR43407:SF1">
    <property type="entry name" value="LENGSIN"/>
    <property type="match status" value="1"/>
</dbReference>
<dbReference type="Pfam" id="PF00120">
    <property type="entry name" value="Gln-synt_C"/>
    <property type="match status" value="1"/>
</dbReference>
<dbReference type="SMART" id="SM01230">
    <property type="entry name" value="Gln-synt_C"/>
    <property type="match status" value="1"/>
</dbReference>
<dbReference type="SUPFAM" id="SSF54368">
    <property type="entry name" value="Glutamine synthetase, N-terminal domain"/>
    <property type="match status" value="1"/>
</dbReference>
<dbReference type="SUPFAM" id="SSF55931">
    <property type="entry name" value="Glutamine synthetase/guanido kinase"/>
    <property type="match status" value="1"/>
</dbReference>
<dbReference type="PROSITE" id="PS51986">
    <property type="entry name" value="GS_BETA_GRASP"/>
    <property type="match status" value="1"/>
</dbReference>
<dbReference type="PROSITE" id="PS51987">
    <property type="entry name" value="GS_CATALYTIC"/>
    <property type="match status" value="1"/>
</dbReference>
<keyword id="KW-0067">ATP-binding</keyword>
<keyword id="KW-0436">Ligase</keyword>
<keyword id="KW-0547">Nucleotide-binding</keyword>
<keyword id="KW-0614">Plasmid</keyword>
<feature type="chain" id="PRO_0000435684" description="Gamma-glutamylanilide synthase">
    <location>
        <begin position="1"/>
        <end position="500"/>
    </location>
</feature>
<feature type="domain" description="GS beta-grasp" evidence="1">
    <location>
        <begin position="32"/>
        <end position="136"/>
    </location>
</feature>
<feature type="domain" description="GS catalytic" evidence="2">
    <location>
        <begin position="143"/>
        <end position="500"/>
    </location>
</feature>
<evidence type="ECO:0000255" key="1">
    <source>
        <dbReference type="PROSITE-ProRule" id="PRU01330"/>
    </source>
</evidence>
<evidence type="ECO:0000255" key="2">
    <source>
        <dbReference type="PROSITE-ProRule" id="PRU01331"/>
    </source>
</evidence>
<evidence type="ECO:0000269" key="3">
    <source>
    </source>
</evidence>
<evidence type="ECO:0000303" key="4">
    <source>
    </source>
</evidence>
<evidence type="ECO:0000303" key="5">
    <source>
    </source>
</evidence>
<evidence type="ECO:0000303" key="6">
    <source ref="2"/>
</evidence>
<evidence type="ECO:0000305" key="7"/>
<evidence type="ECO:0000312" key="8">
    <source>
        <dbReference type="EMBL" id="BAA13010.1"/>
    </source>
</evidence>
<comment type="function">
    <text evidence="3">Involved in the initial oxidation of aniline to catechol by the release of its amino group (PubMed:23893114). Catalyzes the ATP-dependent ligation of L-glutamate to aniline to yield gamma-glutamylanilide (gamma-GA) (PubMed:23893114). AtdA1 has a broad substrate range and is able to convert the following anilines, including chlorinated and methylated forms of aniline: aniline (100%), o-chloroaniline (92%), m-chloroaniline (69%), p-chloroaniline (92%), o-methylaniline (40%), m-methylaniline (27%) and p-methylaniline (45%) (PubMed:23893114).</text>
</comment>
<comment type="catalytic activity">
    <reaction evidence="3">
        <text>aniline + L-glutamate + ATP = N(5)-phenyl-L-glutamine + ADP + phosphate</text>
        <dbReference type="Rhea" id="RHEA:41648"/>
        <dbReference type="ChEBI" id="CHEBI:17296"/>
        <dbReference type="ChEBI" id="CHEBI:29985"/>
        <dbReference type="ChEBI" id="CHEBI:30616"/>
        <dbReference type="ChEBI" id="CHEBI:43474"/>
        <dbReference type="ChEBI" id="CHEBI:78375"/>
        <dbReference type="ChEBI" id="CHEBI:456216"/>
        <dbReference type="EC" id="6.3.1.18"/>
    </reaction>
</comment>
<comment type="biophysicochemical properties">
    <phDependence>
        <text evidence="3">Optimum pH is between 8 and 10.</text>
    </phDependence>
    <temperatureDependence>
        <text evidence="3">Optimum temperature is 40 degrees Celsius.</text>
    </temperatureDependence>
</comment>
<comment type="subunit">
    <text evidence="3">Homohexamer.</text>
</comment>
<comment type="similarity">
    <text evidence="7">Belongs to the glutamine synthetase family.</text>
</comment>
<geneLocation type="plasmid" evidence="8">
    <name>pYA1</name>
</geneLocation>
<sequence length="500" mass="54993">MSEKLDFITKNNLWTDKQRDAADKVLAEIDSLGLEMIRLSWADQYGLLRGKALSVAALKAAFSEGSEVTMAPFSFNLVSEWVFNPFTAGGGFGIDEFDELGGVPSVVMVPDPTTFKVLPWADKTGWMLADLHWKSGEPFPLCPRGIMKKAVKSLSDEGYLFKCGIELEWYLTKIVDRSLSPESLGAPGVQPDAIQVQPVAQGYSYLLEYHLDQVDDIMSKVRKGLLELNLPLRSIEDELAPSQMETTFDVMEGLEAADAALLIKSAIKQICSRHGYHATFMCKPAINGFSVASGWHMHQSLVDKDTRKNLFIPSEGEVVSPLGRAYAGGLLANGSAASSFTTPTVNGYRRRQPHSLAPDRRAWAKENKAAMVRVISATGDPASRIENRIGEPGANPYLYMASQIVSGLDGIKIKRDPGGLQGAPYGAQVPMLPTALAEALDALEHDSELFRSCFGDTFIKYWLQLRRSEWARFLDAEGAEAAEPTGAVTQWEQKEYFNLL</sequence>